<comment type="function">
    <text evidence="1">Catalyzes the last two sequential reactions in the de novo biosynthetic pathway for UDP-N-acetylglucosamine (UDP-GlcNAc). The C-terminal domain catalyzes the transfer of acetyl group from acetyl coenzyme A to glucosamine-1-phosphate (GlcN-1-P) to produce N-acetylglucosamine-1-phosphate (GlcNAc-1-P), which is converted into UDP-GlcNAc by the transfer of uridine 5-monophosphate (from uridine 5-triphosphate), a reaction catalyzed by the N-terminal domain.</text>
</comment>
<comment type="catalytic activity">
    <reaction evidence="1">
        <text>alpha-D-glucosamine 1-phosphate + acetyl-CoA = N-acetyl-alpha-D-glucosamine 1-phosphate + CoA + H(+)</text>
        <dbReference type="Rhea" id="RHEA:13725"/>
        <dbReference type="ChEBI" id="CHEBI:15378"/>
        <dbReference type="ChEBI" id="CHEBI:57287"/>
        <dbReference type="ChEBI" id="CHEBI:57288"/>
        <dbReference type="ChEBI" id="CHEBI:57776"/>
        <dbReference type="ChEBI" id="CHEBI:58516"/>
        <dbReference type="EC" id="2.3.1.157"/>
    </reaction>
</comment>
<comment type="catalytic activity">
    <reaction evidence="1">
        <text>N-acetyl-alpha-D-glucosamine 1-phosphate + UTP + H(+) = UDP-N-acetyl-alpha-D-glucosamine + diphosphate</text>
        <dbReference type="Rhea" id="RHEA:13509"/>
        <dbReference type="ChEBI" id="CHEBI:15378"/>
        <dbReference type="ChEBI" id="CHEBI:33019"/>
        <dbReference type="ChEBI" id="CHEBI:46398"/>
        <dbReference type="ChEBI" id="CHEBI:57705"/>
        <dbReference type="ChEBI" id="CHEBI:57776"/>
        <dbReference type="EC" id="2.7.7.23"/>
    </reaction>
</comment>
<comment type="cofactor">
    <cofactor evidence="1">
        <name>Mg(2+)</name>
        <dbReference type="ChEBI" id="CHEBI:18420"/>
    </cofactor>
    <text evidence="1">Binds 1 Mg(2+) ion per subunit.</text>
</comment>
<comment type="pathway">
    <text evidence="1">Nucleotide-sugar biosynthesis; UDP-N-acetyl-alpha-D-glucosamine biosynthesis; N-acetyl-alpha-D-glucosamine 1-phosphate from alpha-D-glucosamine 6-phosphate (route II): step 2/2.</text>
</comment>
<comment type="pathway">
    <text evidence="1">Nucleotide-sugar biosynthesis; UDP-N-acetyl-alpha-D-glucosamine biosynthesis; UDP-N-acetyl-alpha-D-glucosamine from N-acetyl-alpha-D-glucosamine 1-phosphate: step 1/1.</text>
</comment>
<comment type="pathway">
    <text evidence="1">Bacterial outer membrane biogenesis; LPS lipid A biosynthesis.</text>
</comment>
<comment type="subunit">
    <text evidence="1">Homotrimer.</text>
</comment>
<comment type="subcellular location">
    <subcellularLocation>
        <location evidence="1">Cytoplasm</location>
    </subcellularLocation>
</comment>
<comment type="similarity">
    <text evidence="1">In the N-terminal section; belongs to the N-acetylglucosamine-1-phosphate uridyltransferase family.</text>
</comment>
<comment type="similarity">
    <text evidence="1">In the C-terminal section; belongs to the transferase hexapeptide repeat family.</text>
</comment>
<sequence>MSKRYAVVLAAGQGTRMKSKLYKVLHPVCGKPMVEHVVDQISTLNVDKVVTIVGHGAEKVQEHLAGKSEFVKQEEQLGTAHAVLQAKAELAGKDGVTLVVCGDTPLIEASTMEALLKYHHEKRAKATILTTVIEDPTGYGRIIRDDLGIVEKIVEHKDATEKEQRISEINTGTYCFDNKALFEALENVSNDNVQGEYYLPDVIKILKDSDEVVAAYRMESFEESLGVNDRIALAEASKLMQRRINENHMRNGVTLVNPESTYIDIDVKIGQDTVIEPGVMLRGKTVIGDDCVVTSGSEIVNSVIGERVHVRTSSIFESKVGDDVQIGPYAHLRPESDIHDNVKIGNYVETKKAVVGEGTKLPHFIYMGDAEIGKNVNVGCGSIAVNYDGKNKAKTIIGDNVFVGCNSNLIAPVKVGDRAFIAAGSTITKDVPDDALGIARAKQDNKLGYAKHLNHGK</sequence>
<keyword id="KW-0012">Acyltransferase</keyword>
<keyword id="KW-0133">Cell shape</keyword>
<keyword id="KW-0961">Cell wall biogenesis/degradation</keyword>
<keyword id="KW-0963">Cytoplasm</keyword>
<keyword id="KW-0460">Magnesium</keyword>
<keyword id="KW-0479">Metal-binding</keyword>
<keyword id="KW-0511">Multifunctional enzyme</keyword>
<keyword id="KW-0548">Nucleotidyltransferase</keyword>
<keyword id="KW-0573">Peptidoglycan synthesis</keyword>
<keyword id="KW-0677">Repeat</keyword>
<keyword id="KW-0808">Transferase</keyword>
<name>GLMU_LISMH</name>
<organism>
    <name type="scientific">Listeria monocytogenes serotype 4a (strain HCC23)</name>
    <dbReference type="NCBI Taxonomy" id="552536"/>
    <lineage>
        <taxon>Bacteria</taxon>
        <taxon>Bacillati</taxon>
        <taxon>Bacillota</taxon>
        <taxon>Bacilli</taxon>
        <taxon>Bacillales</taxon>
        <taxon>Listeriaceae</taxon>
        <taxon>Listeria</taxon>
    </lineage>
</organism>
<reference key="1">
    <citation type="journal article" date="2011" name="J. Bacteriol.">
        <title>Genome sequence of lineage III Listeria monocytogenes strain HCC23.</title>
        <authorList>
            <person name="Steele C.L."/>
            <person name="Donaldson J.R."/>
            <person name="Paul D."/>
            <person name="Banes M.M."/>
            <person name="Arick T."/>
            <person name="Bridges S.M."/>
            <person name="Lawrence M.L."/>
        </authorList>
    </citation>
    <scope>NUCLEOTIDE SEQUENCE [LARGE SCALE GENOMIC DNA]</scope>
    <source>
        <strain>HCC23</strain>
    </source>
</reference>
<accession>B8DGM7</accession>
<proteinExistence type="inferred from homology"/>
<protein>
    <recommendedName>
        <fullName evidence="1">Bifunctional protein GlmU</fullName>
    </recommendedName>
    <domain>
        <recommendedName>
            <fullName evidence="1">UDP-N-acetylglucosamine pyrophosphorylase</fullName>
            <ecNumber evidence="1">2.7.7.23</ecNumber>
        </recommendedName>
        <alternativeName>
            <fullName evidence="1">N-acetylglucosamine-1-phosphate uridyltransferase</fullName>
        </alternativeName>
    </domain>
    <domain>
        <recommendedName>
            <fullName evidence="1">Glucosamine-1-phosphate N-acetyltransferase</fullName>
            <ecNumber evidence="1">2.3.1.157</ecNumber>
        </recommendedName>
    </domain>
</protein>
<dbReference type="EC" id="2.7.7.23" evidence="1"/>
<dbReference type="EC" id="2.3.1.157" evidence="1"/>
<dbReference type="EMBL" id="CP001175">
    <property type="protein sequence ID" value="ACK40780.1"/>
    <property type="molecule type" value="Genomic_DNA"/>
</dbReference>
<dbReference type="RefSeq" id="WP_012582098.1">
    <property type="nucleotide sequence ID" value="NC_011660.1"/>
</dbReference>
<dbReference type="SMR" id="B8DGM7"/>
<dbReference type="KEGG" id="lmh:LMHCC_2445"/>
<dbReference type="HOGENOM" id="CLU_029499_15_2_9"/>
<dbReference type="UniPathway" id="UPA00113">
    <property type="reaction ID" value="UER00532"/>
</dbReference>
<dbReference type="UniPathway" id="UPA00113">
    <property type="reaction ID" value="UER00533"/>
</dbReference>
<dbReference type="UniPathway" id="UPA00973"/>
<dbReference type="GO" id="GO:0005737">
    <property type="term" value="C:cytoplasm"/>
    <property type="evidence" value="ECO:0007669"/>
    <property type="project" value="UniProtKB-SubCell"/>
</dbReference>
<dbReference type="GO" id="GO:0016020">
    <property type="term" value="C:membrane"/>
    <property type="evidence" value="ECO:0007669"/>
    <property type="project" value="GOC"/>
</dbReference>
<dbReference type="GO" id="GO:0019134">
    <property type="term" value="F:glucosamine-1-phosphate N-acetyltransferase activity"/>
    <property type="evidence" value="ECO:0007669"/>
    <property type="project" value="UniProtKB-UniRule"/>
</dbReference>
<dbReference type="GO" id="GO:0000287">
    <property type="term" value="F:magnesium ion binding"/>
    <property type="evidence" value="ECO:0007669"/>
    <property type="project" value="UniProtKB-UniRule"/>
</dbReference>
<dbReference type="GO" id="GO:0003977">
    <property type="term" value="F:UDP-N-acetylglucosamine diphosphorylase activity"/>
    <property type="evidence" value="ECO:0007669"/>
    <property type="project" value="UniProtKB-UniRule"/>
</dbReference>
<dbReference type="GO" id="GO:0000902">
    <property type="term" value="P:cell morphogenesis"/>
    <property type="evidence" value="ECO:0007669"/>
    <property type="project" value="UniProtKB-UniRule"/>
</dbReference>
<dbReference type="GO" id="GO:0071555">
    <property type="term" value="P:cell wall organization"/>
    <property type="evidence" value="ECO:0007669"/>
    <property type="project" value="UniProtKB-KW"/>
</dbReference>
<dbReference type="GO" id="GO:0009245">
    <property type="term" value="P:lipid A biosynthetic process"/>
    <property type="evidence" value="ECO:0007669"/>
    <property type="project" value="UniProtKB-UniRule"/>
</dbReference>
<dbReference type="GO" id="GO:0009252">
    <property type="term" value="P:peptidoglycan biosynthetic process"/>
    <property type="evidence" value="ECO:0007669"/>
    <property type="project" value="UniProtKB-UniRule"/>
</dbReference>
<dbReference type="GO" id="GO:0008360">
    <property type="term" value="P:regulation of cell shape"/>
    <property type="evidence" value="ECO:0007669"/>
    <property type="project" value="UniProtKB-KW"/>
</dbReference>
<dbReference type="GO" id="GO:0006048">
    <property type="term" value="P:UDP-N-acetylglucosamine biosynthetic process"/>
    <property type="evidence" value="ECO:0007669"/>
    <property type="project" value="UniProtKB-UniPathway"/>
</dbReference>
<dbReference type="CDD" id="cd02540">
    <property type="entry name" value="GT2_GlmU_N_bac"/>
    <property type="match status" value="1"/>
</dbReference>
<dbReference type="CDD" id="cd03353">
    <property type="entry name" value="LbH_GlmU_C"/>
    <property type="match status" value="1"/>
</dbReference>
<dbReference type="Gene3D" id="2.160.10.10">
    <property type="entry name" value="Hexapeptide repeat proteins"/>
    <property type="match status" value="1"/>
</dbReference>
<dbReference type="Gene3D" id="3.90.550.10">
    <property type="entry name" value="Spore Coat Polysaccharide Biosynthesis Protein SpsA, Chain A"/>
    <property type="match status" value="1"/>
</dbReference>
<dbReference type="HAMAP" id="MF_01631">
    <property type="entry name" value="GlmU"/>
    <property type="match status" value="1"/>
</dbReference>
<dbReference type="InterPro" id="IPR005882">
    <property type="entry name" value="Bifunctional_GlmU"/>
</dbReference>
<dbReference type="InterPro" id="IPR050065">
    <property type="entry name" value="GlmU-like"/>
</dbReference>
<dbReference type="InterPro" id="IPR038009">
    <property type="entry name" value="GlmU_C_LbH"/>
</dbReference>
<dbReference type="InterPro" id="IPR001451">
    <property type="entry name" value="Hexapep"/>
</dbReference>
<dbReference type="InterPro" id="IPR018357">
    <property type="entry name" value="Hexapep_transf_CS"/>
</dbReference>
<dbReference type="InterPro" id="IPR005835">
    <property type="entry name" value="NTP_transferase_dom"/>
</dbReference>
<dbReference type="InterPro" id="IPR029044">
    <property type="entry name" value="Nucleotide-diphossugar_trans"/>
</dbReference>
<dbReference type="InterPro" id="IPR011004">
    <property type="entry name" value="Trimer_LpxA-like_sf"/>
</dbReference>
<dbReference type="NCBIfam" id="TIGR01173">
    <property type="entry name" value="glmU"/>
    <property type="match status" value="1"/>
</dbReference>
<dbReference type="NCBIfam" id="NF010934">
    <property type="entry name" value="PRK14354.1"/>
    <property type="match status" value="1"/>
</dbReference>
<dbReference type="PANTHER" id="PTHR43584:SF3">
    <property type="entry name" value="BIFUNCTIONAL PROTEIN GLMU"/>
    <property type="match status" value="1"/>
</dbReference>
<dbReference type="PANTHER" id="PTHR43584">
    <property type="entry name" value="NUCLEOTIDYL TRANSFERASE"/>
    <property type="match status" value="1"/>
</dbReference>
<dbReference type="Pfam" id="PF00132">
    <property type="entry name" value="Hexapep"/>
    <property type="match status" value="3"/>
</dbReference>
<dbReference type="Pfam" id="PF00483">
    <property type="entry name" value="NTP_transferase"/>
    <property type="match status" value="1"/>
</dbReference>
<dbReference type="SUPFAM" id="SSF53448">
    <property type="entry name" value="Nucleotide-diphospho-sugar transferases"/>
    <property type="match status" value="1"/>
</dbReference>
<dbReference type="SUPFAM" id="SSF51161">
    <property type="entry name" value="Trimeric LpxA-like enzymes"/>
    <property type="match status" value="1"/>
</dbReference>
<dbReference type="PROSITE" id="PS00101">
    <property type="entry name" value="HEXAPEP_TRANSFERASES"/>
    <property type="match status" value="1"/>
</dbReference>
<feature type="chain" id="PRO_1000186465" description="Bifunctional protein GlmU">
    <location>
        <begin position="1"/>
        <end position="457"/>
    </location>
</feature>
<feature type="region of interest" description="Pyrophosphorylase" evidence="1">
    <location>
        <begin position="1"/>
        <end position="230"/>
    </location>
</feature>
<feature type="region of interest" description="Linker" evidence="1">
    <location>
        <begin position="231"/>
        <end position="251"/>
    </location>
</feature>
<feature type="region of interest" description="N-acetyltransferase" evidence="1">
    <location>
        <begin position="252"/>
        <end position="457"/>
    </location>
</feature>
<feature type="active site" description="Proton acceptor" evidence="1">
    <location>
        <position position="363"/>
    </location>
</feature>
<feature type="binding site" evidence="1">
    <location>
        <begin position="9"/>
        <end position="12"/>
    </location>
    <ligand>
        <name>UDP-N-acetyl-alpha-D-glucosamine</name>
        <dbReference type="ChEBI" id="CHEBI:57705"/>
    </ligand>
</feature>
<feature type="binding site" evidence="1">
    <location>
        <position position="23"/>
    </location>
    <ligand>
        <name>UDP-N-acetyl-alpha-D-glucosamine</name>
        <dbReference type="ChEBI" id="CHEBI:57705"/>
    </ligand>
</feature>
<feature type="binding site" evidence="1">
    <location>
        <position position="73"/>
    </location>
    <ligand>
        <name>UDP-N-acetyl-alpha-D-glucosamine</name>
        <dbReference type="ChEBI" id="CHEBI:57705"/>
    </ligand>
</feature>
<feature type="binding site" evidence="1">
    <location>
        <begin position="78"/>
        <end position="79"/>
    </location>
    <ligand>
        <name>UDP-N-acetyl-alpha-D-glucosamine</name>
        <dbReference type="ChEBI" id="CHEBI:57705"/>
    </ligand>
</feature>
<feature type="binding site" evidence="1">
    <location>
        <position position="103"/>
    </location>
    <ligand>
        <name>Mg(2+)</name>
        <dbReference type="ChEBI" id="CHEBI:18420"/>
    </ligand>
</feature>
<feature type="binding site" evidence="1">
    <location>
        <position position="140"/>
    </location>
    <ligand>
        <name>UDP-N-acetyl-alpha-D-glucosamine</name>
        <dbReference type="ChEBI" id="CHEBI:57705"/>
    </ligand>
</feature>
<feature type="binding site" evidence="1">
    <location>
        <position position="155"/>
    </location>
    <ligand>
        <name>UDP-N-acetyl-alpha-D-glucosamine</name>
        <dbReference type="ChEBI" id="CHEBI:57705"/>
    </ligand>
</feature>
<feature type="binding site" evidence="1">
    <location>
        <position position="170"/>
    </location>
    <ligand>
        <name>UDP-N-acetyl-alpha-D-glucosamine</name>
        <dbReference type="ChEBI" id="CHEBI:57705"/>
    </ligand>
</feature>
<feature type="binding site" evidence="1">
    <location>
        <position position="228"/>
    </location>
    <ligand>
        <name>Mg(2+)</name>
        <dbReference type="ChEBI" id="CHEBI:18420"/>
    </ligand>
</feature>
<feature type="binding site" evidence="1">
    <location>
        <position position="228"/>
    </location>
    <ligand>
        <name>UDP-N-acetyl-alpha-D-glucosamine</name>
        <dbReference type="ChEBI" id="CHEBI:57705"/>
    </ligand>
</feature>
<feature type="binding site" evidence="1">
    <location>
        <position position="333"/>
    </location>
    <ligand>
        <name>UDP-N-acetyl-alpha-D-glucosamine</name>
        <dbReference type="ChEBI" id="CHEBI:57705"/>
    </ligand>
</feature>
<feature type="binding site" evidence="1">
    <location>
        <position position="351"/>
    </location>
    <ligand>
        <name>UDP-N-acetyl-alpha-D-glucosamine</name>
        <dbReference type="ChEBI" id="CHEBI:57705"/>
    </ligand>
</feature>
<feature type="binding site" evidence="1">
    <location>
        <position position="366"/>
    </location>
    <ligand>
        <name>UDP-N-acetyl-alpha-D-glucosamine</name>
        <dbReference type="ChEBI" id="CHEBI:57705"/>
    </ligand>
</feature>
<feature type="binding site" evidence="1">
    <location>
        <position position="377"/>
    </location>
    <ligand>
        <name>UDP-N-acetyl-alpha-D-glucosamine</name>
        <dbReference type="ChEBI" id="CHEBI:57705"/>
    </ligand>
</feature>
<feature type="binding site" evidence="1">
    <location>
        <begin position="386"/>
        <end position="387"/>
    </location>
    <ligand>
        <name>acetyl-CoA</name>
        <dbReference type="ChEBI" id="CHEBI:57288"/>
    </ligand>
</feature>
<feature type="binding site" evidence="1">
    <location>
        <position position="423"/>
    </location>
    <ligand>
        <name>acetyl-CoA</name>
        <dbReference type="ChEBI" id="CHEBI:57288"/>
    </ligand>
</feature>
<feature type="binding site" evidence="1">
    <location>
        <position position="440"/>
    </location>
    <ligand>
        <name>acetyl-CoA</name>
        <dbReference type="ChEBI" id="CHEBI:57288"/>
    </ligand>
</feature>
<gene>
    <name evidence="1" type="primary">glmU</name>
    <name type="ordered locus">LMHCC_2445</name>
</gene>
<evidence type="ECO:0000255" key="1">
    <source>
        <dbReference type="HAMAP-Rule" id="MF_01631"/>
    </source>
</evidence>